<sequence length="186" mass="20818">MDTFSTKSLALQAQKKVLSKMASKAMVAVFVDNTSSEVLDELYQATKEFTRSRKEAQRVVKNLVKVAVKLAVLLRADQLDSNELAQLQRFRGRVRSLAMTALSFHQVDFTFDRRVLATGLLECRDLLHQAIGPHLTAKSHGRINHIFSHFANGDFLAALYSPAEPYRSHLCRICDGLGRMLDEGGI</sequence>
<dbReference type="EMBL" id="AK004949">
    <property type="protein sequence ID" value="BAB23693.1"/>
    <property type="molecule type" value="mRNA"/>
</dbReference>
<dbReference type="EMBL" id="AK011245">
    <property type="protein sequence ID" value="BAB27492.1"/>
    <property type="molecule type" value="mRNA"/>
</dbReference>
<dbReference type="EMBL" id="AK090348">
    <property type="protein sequence ID" value="BAC41180.1"/>
    <property type="molecule type" value="mRNA"/>
</dbReference>
<dbReference type="EMBL" id="AK136962">
    <property type="protein sequence ID" value="BAE23189.1"/>
    <property type="molecule type" value="mRNA"/>
</dbReference>
<dbReference type="EMBL" id="AK150678">
    <property type="protein sequence ID" value="BAE29758.1"/>
    <property type="molecule type" value="mRNA"/>
</dbReference>
<dbReference type="EMBL" id="AK153177">
    <property type="protein sequence ID" value="BAE31780.1"/>
    <property type="molecule type" value="mRNA"/>
</dbReference>
<dbReference type="EMBL" id="BC032199">
    <property type="protein sequence ID" value="AAH32199.1"/>
    <property type="molecule type" value="mRNA"/>
</dbReference>
<dbReference type="CCDS" id="CCDS28897.1"/>
<dbReference type="RefSeq" id="NP_079842.2">
    <property type="nucleotide sequence ID" value="NM_025566.3"/>
</dbReference>
<dbReference type="RefSeq" id="XP_030105845.1">
    <property type="nucleotide sequence ID" value="XM_030249985.1"/>
</dbReference>
<dbReference type="RefSeq" id="XP_036016636.1">
    <property type="nucleotide sequence ID" value="XM_036160743.1"/>
</dbReference>
<dbReference type="SMR" id="Q8K288"/>
<dbReference type="FunCoup" id="Q8K288">
    <property type="interactions" value="436"/>
</dbReference>
<dbReference type="STRING" id="10090.ENSMUSP00000076961"/>
<dbReference type="PhosphoSitePlus" id="Q8K288"/>
<dbReference type="PaxDb" id="10090-ENSMUSP00000076961"/>
<dbReference type="PeptideAtlas" id="Q8K288"/>
<dbReference type="ProteomicsDB" id="258818"/>
<dbReference type="Pumba" id="Q8K288"/>
<dbReference type="Antibodypedia" id="23694">
    <property type="antibodies" value="48 antibodies from 21 providers"/>
</dbReference>
<dbReference type="DNASU" id="66443"/>
<dbReference type="Ensembl" id="ENSMUST00000077788.7">
    <property type="protein sequence ID" value="ENSMUSP00000076961.7"/>
    <property type="gene ID" value="ENSMUSG00000044469.9"/>
</dbReference>
<dbReference type="GeneID" id="66443"/>
<dbReference type="KEGG" id="mmu:66443"/>
<dbReference type="UCSC" id="uc008dbf.2">
    <property type="organism name" value="mouse"/>
</dbReference>
<dbReference type="AGR" id="MGI:1913693"/>
<dbReference type="CTD" id="126282"/>
<dbReference type="MGI" id="MGI:1913693">
    <property type="gene designation" value="Tnfaip8l1"/>
</dbReference>
<dbReference type="VEuPathDB" id="HostDB:ENSMUSG00000044469"/>
<dbReference type="eggNOG" id="ENOG502S00N">
    <property type="taxonomic scope" value="Eukaryota"/>
</dbReference>
<dbReference type="GeneTree" id="ENSGT00390000003488"/>
<dbReference type="HOGENOM" id="CLU_085918_1_0_1"/>
<dbReference type="InParanoid" id="Q8K288"/>
<dbReference type="OMA" id="QRICNGL"/>
<dbReference type="OrthoDB" id="10055976at2759"/>
<dbReference type="PhylomeDB" id="Q8K288"/>
<dbReference type="TreeFam" id="TF323415"/>
<dbReference type="Reactome" id="R-MMU-1483255">
    <property type="pathway name" value="PI Metabolism"/>
</dbReference>
<dbReference type="BioGRID-ORCS" id="66443">
    <property type="hits" value="4 hits in 78 CRISPR screens"/>
</dbReference>
<dbReference type="ChiTaRS" id="Tnfaip8l1">
    <property type="organism name" value="mouse"/>
</dbReference>
<dbReference type="PRO" id="PR:Q8K288"/>
<dbReference type="Proteomes" id="UP000000589">
    <property type="component" value="Chromosome 17"/>
</dbReference>
<dbReference type="RNAct" id="Q8K288">
    <property type="molecule type" value="protein"/>
</dbReference>
<dbReference type="Bgee" id="ENSMUSG00000044469">
    <property type="expression patterns" value="Expressed in left lobe of liver and 177 other cell types or tissues"/>
</dbReference>
<dbReference type="GO" id="GO:0005737">
    <property type="term" value="C:cytoplasm"/>
    <property type="evidence" value="ECO:0000314"/>
    <property type="project" value="UniProtKB"/>
</dbReference>
<dbReference type="GO" id="GO:0042802">
    <property type="term" value="F:identical protein binding"/>
    <property type="evidence" value="ECO:0007669"/>
    <property type="project" value="Ensembl"/>
</dbReference>
<dbReference type="GO" id="GO:0032007">
    <property type="term" value="P:negative regulation of TOR signaling"/>
    <property type="evidence" value="ECO:0000314"/>
    <property type="project" value="UniProtKB"/>
</dbReference>
<dbReference type="GO" id="GO:0042981">
    <property type="term" value="P:regulation of apoptotic process"/>
    <property type="evidence" value="ECO:0007669"/>
    <property type="project" value="InterPro"/>
</dbReference>
<dbReference type="FunFam" id="1.20.1440.160:FF:000001">
    <property type="entry name" value="Tumor necrosis factor alpha-induced protein 8-like 1"/>
    <property type="match status" value="1"/>
</dbReference>
<dbReference type="Gene3D" id="1.20.1440.160">
    <property type="entry name" value="Tumor necrosis factor alpha-induced protein 8-like"/>
    <property type="match status" value="1"/>
</dbReference>
<dbReference type="InterPro" id="IPR008477">
    <property type="entry name" value="TNFAIP8-like"/>
</dbReference>
<dbReference type="InterPro" id="IPR038355">
    <property type="entry name" value="TNFAIP8_sf"/>
</dbReference>
<dbReference type="PANTHER" id="PTHR12757:SF2">
    <property type="entry name" value="TUMOR NECROSIS FACTOR ALPHA-INDUCED PROTEIN 8-LIKE PROTEIN 1"/>
    <property type="match status" value="1"/>
</dbReference>
<dbReference type="PANTHER" id="PTHR12757">
    <property type="entry name" value="TUMOR NECROSIS FACTOR INDUCED PROTEIN"/>
    <property type="match status" value="1"/>
</dbReference>
<dbReference type="Pfam" id="PF05527">
    <property type="entry name" value="DUF758"/>
    <property type="match status" value="1"/>
</dbReference>
<proteinExistence type="evidence at protein level"/>
<organism>
    <name type="scientific">Mus musculus</name>
    <name type="common">Mouse</name>
    <dbReference type="NCBI Taxonomy" id="10090"/>
    <lineage>
        <taxon>Eukaryota</taxon>
        <taxon>Metazoa</taxon>
        <taxon>Chordata</taxon>
        <taxon>Craniata</taxon>
        <taxon>Vertebrata</taxon>
        <taxon>Euteleostomi</taxon>
        <taxon>Mammalia</taxon>
        <taxon>Eutheria</taxon>
        <taxon>Euarchontoglires</taxon>
        <taxon>Glires</taxon>
        <taxon>Rodentia</taxon>
        <taxon>Myomorpha</taxon>
        <taxon>Muroidea</taxon>
        <taxon>Muridae</taxon>
        <taxon>Murinae</taxon>
        <taxon>Mus</taxon>
        <taxon>Mus</taxon>
    </lineage>
</organism>
<feature type="chain" id="PRO_0000285725" description="Tumor necrosis factor alpha-induced protein 8-like protein 1">
    <location>
        <begin position="1"/>
        <end position="186"/>
    </location>
</feature>
<feature type="sequence conflict" description="In Ref. 1; BAB27492/BAB23693." evidence="6" ref="1">
    <original>S</original>
    <variation>T</variation>
    <location>
        <position position="52"/>
    </location>
</feature>
<feature type="sequence conflict" description="In Ref. 1; BAB27492." evidence="6" ref="1">
    <original>S</original>
    <variation>N</variation>
    <location>
        <position position="96"/>
    </location>
</feature>
<feature type="sequence conflict" description="In Ref. 1; BAE31780." evidence="6" ref="1">
    <original>H</original>
    <variation>N</variation>
    <location>
        <position position="149"/>
    </location>
</feature>
<feature type="sequence conflict" description="In Ref. 1; BAE31780." evidence="6" ref="1">
    <original>L</original>
    <variation>M</variation>
    <location>
        <position position="156"/>
    </location>
</feature>
<reference key="1">
    <citation type="journal article" date="2005" name="Science">
        <title>The transcriptional landscape of the mammalian genome.</title>
        <authorList>
            <person name="Carninci P."/>
            <person name="Kasukawa T."/>
            <person name="Katayama S."/>
            <person name="Gough J."/>
            <person name="Frith M.C."/>
            <person name="Maeda N."/>
            <person name="Oyama R."/>
            <person name="Ravasi T."/>
            <person name="Lenhard B."/>
            <person name="Wells C."/>
            <person name="Kodzius R."/>
            <person name="Shimokawa K."/>
            <person name="Bajic V.B."/>
            <person name="Brenner S.E."/>
            <person name="Batalov S."/>
            <person name="Forrest A.R."/>
            <person name="Zavolan M."/>
            <person name="Davis M.J."/>
            <person name="Wilming L.G."/>
            <person name="Aidinis V."/>
            <person name="Allen J.E."/>
            <person name="Ambesi-Impiombato A."/>
            <person name="Apweiler R."/>
            <person name="Aturaliya R.N."/>
            <person name="Bailey T.L."/>
            <person name="Bansal M."/>
            <person name="Baxter L."/>
            <person name="Beisel K.W."/>
            <person name="Bersano T."/>
            <person name="Bono H."/>
            <person name="Chalk A.M."/>
            <person name="Chiu K.P."/>
            <person name="Choudhary V."/>
            <person name="Christoffels A."/>
            <person name="Clutterbuck D.R."/>
            <person name="Crowe M.L."/>
            <person name="Dalla E."/>
            <person name="Dalrymple B.P."/>
            <person name="de Bono B."/>
            <person name="Della Gatta G."/>
            <person name="di Bernardo D."/>
            <person name="Down T."/>
            <person name="Engstrom P."/>
            <person name="Fagiolini M."/>
            <person name="Faulkner G."/>
            <person name="Fletcher C.F."/>
            <person name="Fukushima T."/>
            <person name="Furuno M."/>
            <person name="Futaki S."/>
            <person name="Gariboldi M."/>
            <person name="Georgii-Hemming P."/>
            <person name="Gingeras T.R."/>
            <person name="Gojobori T."/>
            <person name="Green R.E."/>
            <person name="Gustincich S."/>
            <person name="Harbers M."/>
            <person name="Hayashi Y."/>
            <person name="Hensch T.K."/>
            <person name="Hirokawa N."/>
            <person name="Hill D."/>
            <person name="Huminiecki L."/>
            <person name="Iacono M."/>
            <person name="Ikeo K."/>
            <person name="Iwama A."/>
            <person name="Ishikawa T."/>
            <person name="Jakt M."/>
            <person name="Kanapin A."/>
            <person name="Katoh M."/>
            <person name="Kawasawa Y."/>
            <person name="Kelso J."/>
            <person name="Kitamura H."/>
            <person name="Kitano H."/>
            <person name="Kollias G."/>
            <person name="Krishnan S.P."/>
            <person name="Kruger A."/>
            <person name="Kummerfeld S.K."/>
            <person name="Kurochkin I.V."/>
            <person name="Lareau L.F."/>
            <person name="Lazarevic D."/>
            <person name="Lipovich L."/>
            <person name="Liu J."/>
            <person name="Liuni S."/>
            <person name="McWilliam S."/>
            <person name="Madan Babu M."/>
            <person name="Madera M."/>
            <person name="Marchionni L."/>
            <person name="Matsuda H."/>
            <person name="Matsuzawa S."/>
            <person name="Miki H."/>
            <person name="Mignone F."/>
            <person name="Miyake S."/>
            <person name="Morris K."/>
            <person name="Mottagui-Tabar S."/>
            <person name="Mulder N."/>
            <person name="Nakano N."/>
            <person name="Nakauchi H."/>
            <person name="Ng P."/>
            <person name="Nilsson R."/>
            <person name="Nishiguchi S."/>
            <person name="Nishikawa S."/>
            <person name="Nori F."/>
            <person name="Ohara O."/>
            <person name="Okazaki Y."/>
            <person name="Orlando V."/>
            <person name="Pang K.C."/>
            <person name="Pavan W.J."/>
            <person name="Pavesi G."/>
            <person name="Pesole G."/>
            <person name="Petrovsky N."/>
            <person name="Piazza S."/>
            <person name="Reed J."/>
            <person name="Reid J.F."/>
            <person name="Ring B.Z."/>
            <person name="Ringwald M."/>
            <person name="Rost B."/>
            <person name="Ruan Y."/>
            <person name="Salzberg S.L."/>
            <person name="Sandelin A."/>
            <person name="Schneider C."/>
            <person name="Schoenbach C."/>
            <person name="Sekiguchi K."/>
            <person name="Semple C.A."/>
            <person name="Seno S."/>
            <person name="Sessa L."/>
            <person name="Sheng Y."/>
            <person name="Shibata Y."/>
            <person name="Shimada H."/>
            <person name="Shimada K."/>
            <person name="Silva D."/>
            <person name="Sinclair B."/>
            <person name="Sperling S."/>
            <person name="Stupka E."/>
            <person name="Sugiura K."/>
            <person name="Sultana R."/>
            <person name="Takenaka Y."/>
            <person name="Taki K."/>
            <person name="Tammoja K."/>
            <person name="Tan S.L."/>
            <person name="Tang S."/>
            <person name="Taylor M.S."/>
            <person name="Tegner J."/>
            <person name="Teichmann S.A."/>
            <person name="Ueda H.R."/>
            <person name="van Nimwegen E."/>
            <person name="Verardo R."/>
            <person name="Wei C.L."/>
            <person name="Yagi K."/>
            <person name="Yamanishi H."/>
            <person name="Zabarovsky E."/>
            <person name="Zhu S."/>
            <person name="Zimmer A."/>
            <person name="Hide W."/>
            <person name="Bult C."/>
            <person name="Grimmond S.M."/>
            <person name="Teasdale R.D."/>
            <person name="Liu E.T."/>
            <person name="Brusic V."/>
            <person name="Quackenbush J."/>
            <person name="Wahlestedt C."/>
            <person name="Mattick J.S."/>
            <person name="Hume D.A."/>
            <person name="Kai C."/>
            <person name="Sasaki D."/>
            <person name="Tomaru Y."/>
            <person name="Fukuda S."/>
            <person name="Kanamori-Katayama M."/>
            <person name="Suzuki M."/>
            <person name="Aoki J."/>
            <person name="Arakawa T."/>
            <person name="Iida J."/>
            <person name="Imamura K."/>
            <person name="Itoh M."/>
            <person name="Kato T."/>
            <person name="Kawaji H."/>
            <person name="Kawagashira N."/>
            <person name="Kawashima T."/>
            <person name="Kojima M."/>
            <person name="Kondo S."/>
            <person name="Konno H."/>
            <person name="Nakano K."/>
            <person name="Ninomiya N."/>
            <person name="Nishio T."/>
            <person name="Okada M."/>
            <person name="Plessy C."/>
            <person name="Shibata K."/>
            <person name="Shiraki T."/>
            <person name="Suzuki S."/>
            <person name="Tagami M."/>
            <person name="Waki K."/>
            <person name="Watahiki A."/>
            <person name="Okamura-Oho Y."/>
            <person name="Suzuki H."/>
            <person name="Kawai J."/>
            <person name="Hayashizaki Y."/>
        </authorList>
    </citation>
    <scope>NUCLEOTIDE SEQUENCE [LARGE SCALE MRNA]</scope>
    <source>
        <strain>C57BL/6J</strain>
        <tissue>Bone marrow</tissue>
        <tissue>Liver</tissue>
        <tissue>Spinal cord</tissue>
    </source>
</reference>
<reference key="2">
    <citation type="journal article" date="2004" name="Genome Res.">
        <title>The status, quality, and expansion of the NIH full-length cDNA project: the Mammalian Gene Collection (MGC).</title>
        <authorList>
            <consortium name="The MGC Project Team"/>
        </authorList>
    </citation>
    <scope>NUCLEOTIDE SEQUENCE [LARGE SCALE MRNA]</scope>
    <source>
        <strain>FVB/N</strain>
        <tissue>Mammary tumor</tissue>
    </source>
</reference>
<reference key="3">
    <citation type="journal article" date="2010" name="Cell">
        <title>A tissue-specific atlas of mouse protein phosphorylation and expression.</title>
        <authorList>
            <person name="Huttlin E.L."/>
            <person name="Jedrychowski M.P."/>
            <person name="Elias J.E."/>
            <person name="Goswami T."/>
            <person name="Rad R."/>
            <person name="Beausoleil S.A."/>
            <person name="Villen J."/>
            <person name="Haas W."/>
            <person name="Sowa M.E."/>
            <person name="Gygi S.P."/>
        </authorList>
    </citation>
    <scope>IDENTIFICATION BY MASS SPECTROMETRY [LARGE SCALE ANALYSIS]</scope>
    <source>
        <tissue>Liver</tissue>
    </source>
</reference>
<reference key="4">
    <citation type="journal article" date="2010" name="J. Neurochem.">
        <title>A novel mTOR activating protein protects dopamine neurons against oxidative stress by repressing autophagy related cell death.</title>
        <authorList>
            <person name="Choi K.C."/>
            <person name="Kim S.H."/>
            <person name="Ha J.Y."/>
            <person name="Kim S.T."/>
            <person name="Son J.H."/>
        </authorList>
    </citation>
    <scope>INDUCTION</scope>
</reference>
<reference key="5">
    <citation type="journal article" date="2011" name="Mol. Immunol.">
        <title>The expression of TIPE1 in murine tissues and human cell lines.</title>
        <authorList>
            <person name="Cui J."/>
            <person name="Zhang G."/>
            <person name="Hao C."/>
            <person name="Wang Y."/>
            <person name="Lou Y."/>
            <person name="Zhang W."/>
            <person name="Wang J."/>
            <person name="Liu S."/>
        </authorList>
    </citation>
    <scope>TISSUE SPECIFICITY</scope>
    <scope>SUBCELLULAR LOCATION</scope>
</reference>
<reference key="6">
    <citation type="journal article" date="2014" name="J. Neurochem.">
        <title>Tnfaip8 l1/Oxi-beta binds to FBXW5, increasing autophagy through activation of TSC2 in a Parkinson's disease model.</title>
        <authorList>
            <person name="Ha J.Y."/>
            <person name="Kim J.S."/>
            <person name="Kang Y.H."/>
            <person name="Bok E."/>
            <person name="Kim Y.S."/>
            <person name="Son J.H."/>
        </authorList>
    </citation>
    <scope>FUNCTION</scope>
    <scope>INTERACTION WITH FBXW5</scope>
    <scope>INDUCTION</scope>
</reference>
<name>TP8L1_MOUSE</name>
<keyword id="KW-0963">Cytoplasm</keyword>
<keyword id="KW-1185">Reference proteome</keyword>
<comment type="function">
    <text evidence="3">Acts as a negative regulator of mTOR activity.</text>
</comment>
<comment type="subunit">
    <text evidence="3">Interacts with FBXW5; TNFAIP8L1 competes with TSC2 to bind FBXW5 increasing TSC2 stability by preventing its ubiquitination.</text>
</comment>
<comment type="subcellular location">
    <subcellularLocation>
        <location evidence="2">Cytoplasm</location>
    </subcellularLocation>
</comment>
<comment type="tissue specificity">
    <text evidence="2">Detected in wide variety tissues, such as neurons in brain, hepatocytes, germ cells of female and male reproductive organs, muscular tissues and variety types of cells of the epithelial origin (at protein level).</text>
</comment>
<comment type="induction">
    <text evidence="1 3">Up-regulated by oxidative stress and by 6-hydroxydopamine (6-OHDA) in dopaminergic neurons.</text>
</comment>
<comment type="similarity">
    <text evidence="6">Belongs to the TNFAIP8 family.</text>
</comment>
<accession>Q8K288</accession>
<accession>Q3U6E5</accession>
<accession>Q9D0N6</accession>
<accession>Q9DBH7</accession>
<evidence type="ECO:0000269" key="1">
    <source>
    </source>
</evidence>
<evidence type="ECO:0000269" key="2">
    <source>
    </source>
</evidence>
<evidence type="ECO:0000269" key="3">
    <source>
    </source>
</evidence>
<evidence type="ECO:0000303" key="4">
    <source>
    </source>
</evidence>
<evidence type="ECO:0000303" key="5">
    <source>
    </source>
</evidence>
<evidence type="ECO:0000305" key="6"/>
<protein>
    <recommendedName>
        <fullName>Tumor necrosis factor alpha-induced protein 8-like protein 1</fullName>
        <shortName evidence="5">TIPE1</shortName>
        <shortName>TNF alpha-induced protein 8-like protein 1</shortName>
        <shortName>TNFAIP8-like protein 1</shortName>
    </recommendedName>
    <alternativeName>
        <fullName evidence="4">Oxidative stress regulated gene-beta</fullName>
        <shortName evidence="4">Oxy-beta</shortName>
    </alternativeName>
</protein>
<gene>
    <name type="primary">Tnfaip8l1</name>
</gene>